<protein>
    <recommendedName>
        <fullName>Protein transport protein SEC22</fullName>
    </recommendedName>
    <alternativeName>
        <fullName>Suppressor of loss of YPT1 protein 2</fullName>
    </alternativeName>
</protein>
<evidence type="ECO:0000255" key="1"/>
<evidence type="ECO:0000255" key="2">
    <source>
        <dbReference type="PROSITE-ProRule" id="PRU00231"/>
    </source>
</evidence>
<evidence type="ECO:0000255" key="3">
    <source>
        <dbReference type="PROSITE-ProRule" id="PRU00290"/>
    </source>
</evidence>
<evidence type="ECO:0000269" key="4">
    <source>
    </source>
</evidence>
<evidence type="ECO:0000269" key="5">
    <source>
    </source>
</evidence>
<evidence type="ECO:0000269" key="6">
    <source>
    </source>
</evidence>
<evidence type="ECO:0000269" key="7">
    <source>
    </source>
</evidence>
<evidence type="ECO:0000269" key="8">
    <source>
    </source>
</evidence>
<evidence type="ECO:0000269" key="9">
    <source>
    </source>
</evidence>
<evidence type="ECO:0000269" key="10">
    <source>
    </source>
</evidence>
<evidence type="ECO:0000305" key="11"/>
<evidence type="ECO:0007744" key="12">
    <source>
    </source>
</evidence>
<gene>
    <name type="primary">SEC22</name>
    <name type="synonym">SLY2</name>
    <name type="synonym">TSL26</name>
    <name type="ordered locus">YLR268W</name>
    <name type="ORF">L8479.3</name>
</gene>
<dbReference type="EMBL" id="X54236">
    <property type="protein sequence ID" value="CAA38142.1"/>
    <property type="molecule type" value="Genomic_DNA"/>
</dbReference>
<dbReference type="EMBL" id="U17244">
    <property type="protein sequence ID" value="AAB67373.1"/>
    <property type="molecule type" value="Genomic_DNA"/>
</dbReference>
<dbReference type="EMBL" id="AY557935">
    <property type="protein sequence ID" value="AAS56261.1"/>
    <property type="molecule type" value="Genomic_DNA"/>
</dbReference>
<dbReference type="EMBL" id="BK006945">
    <property type="protein sequence ID" value="DAA09582.1"/>
    <property type="molecule type" value="Genomic_DNA"/>
</dbReference>
<dbReference type="PIR" id="S51405">
    <property type="entry name" value="S51405"/>
</dbReference>
<dbReference type="RefSeq" id="NP_013370.1">
    <property type="nucleotide sequence ID" value="NM_001182155.1"/>
</dbReference>
<dbReference type="SMR" id="P22214"/>
<dbReference type="BioGRID" id="31536">
    <property type="interactions" value="1250"/>
</dbReference>
<dbReference type="ComplexPortal" id="CPX-1854">
    <property type="entry name" value="Golgi SNARE complex SED5-BOS1-BET1-SEC22"/>
</dbReference>
<dbReference type="ComplexPortal" id="CPX-5304">
    <property type="entry name" value="Endoplasmic reticulum snare complex UFE1-USE1-SEC20-SEC22"/>
</dbReference>
<dbReference type="DIP" id="DIP-2234N"/>
<dbReference type="FunCoup" id="P22214">
    <property type="interactions" value="1245"/>
</dbReference>
<dbReference type="IntAct" id="P22214">
    <property type="interactions" value="40"/>
</dbReference>
<dbReference type="MINT" id="P22214"/>
<dbReference type="STRING" id="4932.YLR268W"/>
<dbReference type="iPTMnet" id="P22214"/>
<dbReference type="PaxDb" id="4932-YLR268W"/>
<dbReference type="PeptideAtlas" id="P22214"/>
<dbReference type="TopDownProteomics" id="P22214"/>
<dbReference type="EnsemblFungi" id="YLR268W_mRNA">
    <property type="protein sequence ID" value="YLR268W"/>
    <property type="gene ID" value="YLR268W"/>
</dbReference>
<dbReference type="GeneID" id="850973"/>
<dbReference type="KEGG" id="sce:YLR268W"/>
<dbReference type="AGR" id="SGD:S000004258"/>
<dbReference type="SGD" id="S000004258">
    <property type="gene designation" value="SEC22"/>
</dbReference>
<dbReference type="VEuPathDB" id="FungiDB:YLR268W"/>
<dbReference type="eggNOG" id="KOG0862">
    <property type="taxonomic scope" value="Eukaryota"/>
</dbReference>
<dbReference type="GeneTree" id="ENSGT00940000156349"/>
<dbReference type="HOGENOM" id="CLU_054453_4_0_1"/>
<dbReference type="InParanoid" id="P22214"/>
<dbReference type="OMA" id="FIYWRFF"/>
<dbReference type="OrthoDB" id="1719357at2759"/>
<dbReference type="BioCyc" id="YEAST:G3O-32368-MONOMER"/>
<dbReference type="Reactome" id="R-SCE-204005">
    <property type="pathway name" value="COPII-mediated vesicle transport"/>
</dbReference>
<dbReference type="Reactome" id="R-SCE-5694530">
    <property type="pathway name" value="Cargo concentration in the ER"/>
</dbReference>
<dbReference type="Reactome" id="R-SCE-6811434">
    <property type="pathway name" value="COPI-dependent Golgi-to-ER retrograde traffic"/>
</dbReference>
<dbReference type="BioGRID-ORCS" id="850973">
    <property type="hits" value="6 hits in 10 CRISPR screens"/>
</dbReference>
<dbReference type="PRO" id="PR:P22214"/>
<dbReference type="Proteomes" id="UP000002311">
    <property type="component" value="Chromosome XII"/>
</dbReference>
<dbReference type="RNAct" id="P22214">
    <property type="molecule type" value="protein"/>
</dbReference>
<dbReference type="GO" id="GO:0098554">
    <property type="term" value="C:cytoplasmic side of endoplasmic reticulum membrane"/>
    <property type="evidence" value="ECO:0000303"/>
    <property type="project" value="ComplexPortal"/>
</dbReference>
<dbReference type="GO" id="GO:0005783">
    <property type="term" value="C:endoplasmic reticulum"/>
    <property type="evidence" value="ECO:0000314"/>
    <property type="project" value="SGD"/>
</dbReference>
<dbReference type="GO" id="GO:0005789">
    <property type="term" value="C:endoplasmic reticulum membrane"/>
    <property type="evidence" value="ECO:0000318"/>
    <property type="project" value="GO_Central"/>
</dbReference>
<dbReference type="GO" id="GO:0012507">
    <property type="term" value="C:ER to Golgi transport vesicle membrane"/>
    <property type="evidence" value="ECO:0000314"/>
    <property type="project" value="SGD"/>
</dbReference>
<dbReference type="GO" id="GO:0005794">
    <property type="term" value="C:Golgi apparatus"/>
    <property type="evidence" value="ECO:0000314"/>
    <property type="project" value="SGD"/>
</dbReference>
<dbReference type="GO" id="GO:0000139">
    <property type="term" value="C:Golgi membrane"/>
    <property type="evidence" value="ECO:0000318"/>
    <property type="project" value="GO_Central"/>
</dbReference>
<dbReference type="GO" id="GO:0012508">
    <property type="term" value="C:Golgi to ER transport vesicle membrane"/>
    <property type="evidence" value="ECO:0000303"/>
    <property type="project" value="ComplexPortal"/>
</dbReference>
<dbReference type="GO" id="GO:0016020">
    <property type="term" value="C:membrane"/>
    <property type="evidence" value="ECO:0000314"/>
    <property type="project" value="SGD"/>
</dbReference>
<dbReference type="GO" id="GO:0031201">
    <property type="term" value="C:SNARE complex"/>
    <property type="evidence" value="ECO:0000314"/>
    <property type="project" value="SGD"/>
</dbReference>
<dbReference type="GO" id="GO:0005484">
    <property type="term" value="F:SNAP receptor activity"/>
    <property type="evidence" value="ECO:0000314"/>
    <property type="project" value="SGD"/>
</dbReference>
<dbReference type="GO" id="GO:0006888">
    <property type="term" value="P:endoplasmic reticulum to Golgi vesicle-mediated transport"/>
    <property type="evidence" value="ECO:0000315"/>
    <property type="project" value="SGD"/>
</dbReference>
<dbReference type="GO" id="GO:0006886">
    <property type="term" value="P:intracellular protein transport"/>
    <property type="evidence" value="ECO:0000314"/>
    <property type="project" value="ComplexPortal"/>
</dbReference>
<dbReference type="GO" id="GO:0006890">
    <property type="term" value="P:retrograde vesicle-mediated transport, Golgi to endoplasmic reticulum"/>
    <property type="evidence" value="ECO:0000315"/>
    <property type="project" value="SGD"/>
</dbReference>
<dbReference type="GO" id="GO:0006906">
    <property type="term" value="P:vesicle fusion"/>
    <property type="evidence" value="ECO:0000314"/>
    <property type="project" value="SGD"/>
</dbReference>
<dbReference type="GO" id="GO:0048279">
    <property type="term" value="P:vesicle fusion with endoplasmic reticulum"/>
    <property type="evidence" value="ECO:0000303"/>
    <property type="project" value="ComplexPortal"/>
</dbReference>
<dbReference type="GO" id="GO:0048280">
    <property type="term" value="P:vesicle fusion with Golgi apparatus"/>
    <property type="evidence" value="ECO:0000314"/>
    <property type="project" value="ComplexPortal"/>
</dbReference>
<dbReference type="CDD" id="cd14824">
    <property type="entry name" value="Longin"/>
    <property type="match status" value="1"/>
</dbReference>
<dbReference type="CDD" id="cd15866">
    <property type="entry name" value="R-SNARE_SEC22"/>
    <property type="match status" value="1"/>
</dbReference>
<dbReference type="FunFam" id="1.20.5.110:FF:000065">
    <property type="entry name" value="SEC22 (YLR268W)"/>
    <property type="match status" value="1"/>
</dbReference>
<dbReference type="FunFam" id="3.30.450.50:FF:000007">
    <property type="entry name" value="SNARE complex subunit SEC22"/>
    <property type="match status" value="1"/>
</dbReference>
<dbReference type="Gene3D" id="1.20.5.110">
    <property type="match status" value="1"/>
</dbReference>
<dbReference type="Gene3D" id="3.30.450.50">
    <property type="entry name" value="Longin domain"/>
    <property type="match status" value="1"/>
</dbReference>
<dbReference type="InterPro" id="IPR011012">
    <property type="entry name" value="Longin-like_dom_sf"/>
</dbReference>
<dbReference type="InterPro" id="IPR010908">
    <property type="entry name" value="Longin_dom"/>
</dbReference>
<dbReference type="InterPro" id="IPR044565">
    <property type="entry name" value="Sec22"/>
</dbReference>
<dbReference type="InterPro" id="IPR042855">
    <property type="entry name" value="V_SNARE_CC"/>
</dbReference>
<dbReference type="PANTHER" id="PTHR45837">
    <property type="entry name" value="VESICLE-TRAFFICKING PROTEIN SEC22B"/>
    <property type="match status" value="1"/>
</dbReference>
<dbReference type="Pfam" id="PF13774">
    <property type="entry name" value="Longin"/>
    <property type="match status" value="1"/>
</dbReference>
<dbReference type="Pfam" id="PF00957">
    <property type="entry name" value="Synaptobrevin"/>
    <property type="match status" value="1"/>
</dbReference>
<dbReference type="SMART" id="SM01270">
    <property type="entry name" value="Longin"/>
    <property type="match status" value="1"/>
</dbReference>
<dbReference type="SUPFAM" id="SSF58038">
    <property type="entry name" value="SNARE fusion complex"/>
    <property type="match status" value="1"/>
</dbReference>
<dbReference type="SUPFAM" id="SSF64356">
    <property type="entry name" value="SNARE-like"/>
    <property type="match status" value="1"/>
</dbReference>
<dbReference type="PROSITE" id="PS50859">
    <property type="entry name" value="LONGIN"/>
    <property type="match status" value="1"/>
</dbReference>
<dbReference type="PROSITE" id="PS50892">
    <property type="entry name" value="V_SNARE"/>
    <property type="match status" value="1"/>
</dbReference>
<organism>
    <name type="scientific">Saccharomyces cerevisiae (strain ATCC 204508 / S288c)</name>
    <name type="common">Baker's yeast</name>
    <dbReference type="NCBI Taxonomy" id="559292"/>
    <lineage>
        <taxon>Eukaryota</taxon>
        <taxon>Fungi</taxon>
        <taxon>Dikarya</taxon>
        <taxon>Ascomycota</taxon>
        <taxon>Saccharomycotina</taxon>
        <taxon>Saccharomycetes</taxon>
        <taxon>Saccharomycetales</taxon>
        <taxon>Saccharomycetaceae</taxon>
        <taxon>Saccharomyces</taxon>
    </lineage>
</organism>
<comment type="function">
    <text evidence="4 6 7 10">Nonessential SNARE involved in targeting and fusion of ER-derived transport vesicles with the Golgi complex as well as Golgi-derived retrograde transport vesicles with the ER.</text>
</comment>
<comment type="subunit">
    <text evidence="4 5 6 7 8">Component of two distinct SNARE complexes consisting of SED5, BOS1, BET1 and SEC22 or UFE1, USE1, SEC20 and SEC22. YKT6 can probably replace SEC22 as subunit of either complex. Interacts with SEC24, YIF1 and YIP1.</text>
</comment>
<comment type="interaction">
    <interactant intactId="EBI-16577">
        <id>P22214</id>
    </interactant>
    <interactant intactId="EBI-2989">
        <id>Q12154</id>
        <label>GET3</label>
    </interactant>
    <organismsDiffer>false</organismsDiffer>
    <experiments>7</experiments>
</comment>
<comment type="interaction">
    <interactant intactId="EBI-16577">
        <id>P22214</id>
    </interactant>
    <interactant intactId="EBI-36940">
        <id>Q12125</id>
        <label>GET4</label>
    </interactant>
    <organismsDiffer>false</organismsDiffer>
    <experiments>2</experiments>
</comment>
<comment type="interaction">
    <interactant intactId="EBI-16577">
        <id>P22214</id>
    </interactant>
    <interactant intactId="EBI-34904">
        <id>Q12285</id>
        <label>MDY2</label>
    </interactant>
    <organismsDiffer>false</organismsDiffer>
    <experiments>3</experiments>
</comment>
<comment type="interaction">
    <interactant intactId="EBI-16577">
        <id>P22214</id>
    </interactant>
    <interactant intactId="EBI-16572">
        <id>P28791</id>
        <label>SEC20</label>
    </interactant>
    <organismsDiffer>false</organismsDiffer>
    <experiments>4</experiments>
</comment>
<comment type="interaction">
    <interactant intactId="EBI-16577">
        <id>P22214</id>
    </interactant>
    <interactant intactId="EBI-16930">
        <id>Q01590</id>
        <label>SED5</label>
    </interactant>
    <organismsDiffer>false</organismsDiffer>
    <experiments>13</experiments>
</comment>
<comment type="interaction">
    <interactant intactId="EBI-16577">
        <id>P22214</id>
    </interactant>
    <interactant intactId="EBI-31784">
        <id>Q12118</id>
        <label>SGT2</label>
    </interactant>
    <organismsDiffer>false</organismsDiffer>
    <experiments>4</experiments>
</comment>
<comment type="interaction">
    <interactant intactId="EBI-16577">
        <id>P22214</id>
    </interactant>
    <interactant intactId="EBI-2206525">
        <id>P32867</id>
        <label>SSO1</label>
    </interactant>
    <organismsDiffer>false</organismsDiffer>
    <experiments>2</experiments>
</comment>
<comment type="interaction">
    <interactant intactId="EBI-16577">
        <id>P22214</id>
    </interactant>
    <interactant intactId="EBI-20016">
        <id>P41834</id>
        <label>UFE1</label>
    </interactant>
    <organismsDiffer>false</organismsDiffer>
    <experiments>4</experiments>
</comment>
<comment type="interaction">
    <interactant intactId="EBI-16577">
        <id>P22214</id>
    </interactant>
    <interactant intactId="EBI-29496">
        <id>P01123</id>
        <label>YPT1</label>
    </interactant>
    <organismsDiffer>false</organismsDiffer>
    <experiments>2</experiments>
</comment>
<comment type="subcellular location">
    <subcellularLocation>
        <location evidence="11">Membrane</location>
        <topology evidence="11">Single-pass type IV membrane protein</topology>
    </subcellularLocation>
    <subcellularLocation>
        <location evidence="11">Endoplasmic reticulum membrane</location>
        <topology evidence="11">Single-pass type IV membrane protein</topology>
    </subcellularLocation>
    <subcellularLocation>
        <location evidence="11">Golgi apparatus membrane</location>
        <topology evidence="11">Single-pass type IV membrane protein</topology>
    </subcellularLocation>
</comment>
<comment type="miscellaneous">
    <text evidence="9">Present with 396 molecules/cell in log phase SD medium.</text>
</comment>
<comment type="miscellaneous">
    <text>Deletion of SEC22 is viable. Overexpression of SEC22 suppresses deletion of YPT1.</text>
</comment>
<comment type="similarity">
    <text evidence="11">Belongs to the synaptobrevin family.</text>
</comment>
<name>SEC22_YEAST</name>
<keyword id="KW-0175">Coiled coil</keyword>
<keyword id="KW-0256">Endoplasmic reticulum</keyword>
<keyword id="KW-0931">ER-Golgi transport</keyword>
<keyword id="KW-0333">Golgi apparatus</keyword>
<keyword id="KW-0472">Membrane</keyword>
<keyword id="KW-0597">Phosphoprotein</keyword>
<keyword id="KW-0653">Protein transport</keyword>
<keyword id="KW-1185">Reference proteome</keyword>
<keyword id="KW-0812">Transmembrane</keyword>
<keyword id="KW-1133">Transmembrane helix</keyword>
<keyword id="KW-0813">Transport</keyword>
<reference key="1">
    <citation type="journal article" date="1989" name="Yeast">
        <title>Isolation, DNA sequence and regulation of a new cell division cycle gene from the yeast Saccharomyces cerevisiae.</title>
        <authorList>
            <person name="Hasegawa H."/>
            <person name="Sakai A."/>
            <person name="Sugino A."/>
        </authorList>
    </citation>
    <scope>NUCLEOTIDE SEQUENCE [GENOMIC DNA]</scope>
</reference>
<reference key="2">
    <citation type="journal article" date="1991" name="Mol. Cell. Biol.">
        <title>Identification and structure of four yeast genes (SLY) that are able to suppress the functional loss of YPT1, a member of the RAS superfamily.</title>
        <authorList>
            <person name="Dascher C."/>
            <person name="Ossig R."/>
            <person name="Gallwitz D."/>
            <person name="Schmitt H.D."/>
        </authorList>
    </citation>
    <scope>NUCLEOTIDE SEQUENCE [GENOMIC DNA]</scope>
    <scope>FUNCTION</scope>
</reference>
<reference key="3">
    <citation type="journal article" date="1997" name="Nature">
        <title>The nucleotide sequence of Saccharomyces cerevisiae chromosome XII.</title>
        <authorList>
            <person name="Johnston M."/>
            <person name="Hillier L.W."/>
            <person name="Riles L."/>
            <person name="Albermann K."/>
            <person name="Andre B."/>
            <person name="Ansorge W."/>
            <person name="Benes V."/>
            <person name="Brueckner M."/>
            <person name="Delius H."/>
            <person name="Dubois E."/>
            <person name="Duesterhoeft A."/>
            <person name="Entian K.-D."/>
            <person name="Floeth M."/>
            <person name="Goffeau A."/>
            <person name="Hebling U."/>
            <person name="Heumann K."/>
            <person name="Heuss-Neitzel D."/>
            <person name="Hilbert H."/>
            <person name="Hilger F."/>
            <person name="Kleine K."/>
            <person name="Koetter P."/>
            <person name="Louis E.J."/>
            <person name="Messenguy F."/>
            <person name="Mewes H.-W."/>
            <person name="Miosga T."/>
            <person name="Moestl D."/>
            <person name="Mueller-Auer S."/>
            <person name="Nentwich U."/>
            <person name="Obermaier B."/>
            <person name="Piravandi E."/>
            <person name="Pohl T.M."/>
            <person name="Portetelle D."/>
            <person name="Purnelle B."/>
            <person name="Rechmann S."/>
            <person name="Rieger M."/>
            <person name="Rinke M."/>
            <person name="Rose M."/>
            <person name="Scharfe M."/>
            <person name="Scherens B."/>
            <person name="Scholler P."/>
            <person name="Schwager C."/>
            <person name="Schwarz S."/>
            <person name="Underwood A.P."/>
            <person name="Urrestarazu L.A."/>
            <person name="Vandenbol M."/>
            <person name="Verhasselt P."/>
            <person name="Vierendeels F."/>
            <person name="Voet M."/>
            <person name="Volckaert G."/>
            <person name="Voss H."/>
            <person name="Wambutt R."/>
            <person name="Wedler E."/>
            <person name="Wedler H."/>
            <person name="Zimmermann F.K."/>
            <person name="Zollner A."/>
            <person name="Hani J."/>
            <person name="Hoheisel J.D."/>
        </authorList>
    </citation>
    <scope>NUCLEOTIDE SEQUENCE [LARGE SCALE GENOMIC DNA]</scope>
    <source>
        <strain>ATCC 204508 / S288c</strain>
    </source>
</reference>
<reference key="4">
    <citation type="journal article" date="2014" name="G3 (Bethesda)">
        <title>The reference genome sequence of Saccharomyces cerevisiae: Then and now.</title>
        <authorList>
            <person name="Engel S.R."/>
            <person name="Dietrich F.S."/>
            <person name="Fisk D.G."/>
            <person name="Binkley G."/>
            <person name="Balakrishnan R."/>
            <person name="Costanzo M.C."/>
            <person name="Dwight S.S."/>
            <person name="Hitz B.C."/>
            <person name="Karra K."/>
            <person name="Nash R.S."/>
            <person name="Weng S."/>
            <person name="Wong E.D."/>
            <person name="Lloyd P."/>
            <person name="Skrzypek M.S."/>
            <person name="Miyasato S.R."/>
            <person name="Simison M."/>
            <person name="Cherry J.M."/>
        </authorList>
    </citation>
    <scope>GENOME REANNOTATION</scope>
    <source>
        <strain>ATCC 204508 / S288c</strain>
    </source>
</reference>
<reference key="5">
    <citation type="journal article" date="2007" name="Genome Res.">
        <title>Approaching a complete repository of sequence-verified protein-encoding clones for Saccharomyces cerevisiae.</title>
        <authorList>
            <person name="Hu Y."/>
            <person name="Rolfs A."/>
            <person name="Bhullar B."/>
            <person name="Murthy T.V.S."/>
            <person name="Zhu C."/>
            <person name="Berger M.F."/>
            <person name="Camargo A.A."/>
            <person name="Kelley F."/>
            <person name="McCarron S."/>
            <person name="Jepson D."/>
            <person name="Richardson A."/>
            <person name="Raphael J."/>
            <person name="Moreira D."/>
            <person name="Taycher E."/>
            <person name="Zuo D."/>
            <person name="Mohr S."/>
            <person name="Kane M.F."/>
            <person name="Williamson J."/>
            <person name="Simpson A.J.G."/>
            <person name="Bulyk M.L."/>
            <person name="Harlow E."/>
            <person name="Marsischky G."/>
            <person name="Kolodner R.D."/>
            <person name="LaBaer J."/>
        </authorList>
    </citation>
    <scope>NUCLEOTIDE SEQUENCE [GENOMIC DNA]</scope>
    <source>
        <strain>ATCC 204508 / S288c</strain>
    </source>
</reference>
<reference key="6">
    <citation type="journal article" date="2000" name="Nature">
        <title>Topological restriction of SNARE-dependent membrane fusion.</title>
        <authorList>
            <person name="Parlati F."/>
            <person name="McNew J.A."/>
            <person name="Fukuda R."/>
            <person name="Miller R."/>
            <person name="Sollner T.H."/>
            <person name="Rothman J.E."/>
        </authorList>
    </citation>
    <scope>FUNCTION</scope>
    <scope>INTERACTION WITH BET1; BOS1 AND SED5</scope>
</reference>
<reference key="7">
    <citation type="journal article" date="2003" name="Cell">
        <title>SNARE selectivity of the COPII coat.</title>
        <authorList>
            <person name="Mossessova E."/>
            <person name="Bickford L.C."/>
            <person name="Goldberg J."/>
        </authorList>
    </citation>
    <scope>INTERACTION WITH SEC24</scope>
</reference>
<reference key="8">
    <citation type="journal article" date="2003" name="EMBO J.">
        <title>Use1p is a yeast SNARE protein required for retrograde traffic to the ER.</title>
        <authorList>
            <person name="Dilcher M."/>
            <person name="Veith B."/>
            <person name="Chidambaram S."/>
            <person name="Hartmann E."/>
            <person name="Schmitt H.D."/>
            <person name="Fischer von Mollard G."/>
        </authorList>
    </citation>
    <scope>FUNCTION</scope>
    <scope>INTERACTION WITH SEC20; UFE1 AND USE1</scope>
</reference>
<reference key="9">
    <citation type="journal article" date="2003" name="J. Biol. Chem.">
        <title>The Yip1p.Yif1p complex is required for the fusion competence of endoplasmic reticulum-derived vesicles.</title>
        <authorList>
            <person name="Barrowman J."/>
            <person name="Wang W."/>
            <person name="Zhang Y."/>
            <person name="Ferro-Novick S."/>
        </authorList>
    </citation>
    <scope>INTERACTION WITH YIF1 AND YIP1</scope>
</reference>
<reference key="10">
    <citation type="journal article" date="2003" name="Nature">
        <title>Global analysis of protein expression in yeast.</title>
        <authorList>
            <person name="Ghaemmaghami S."/>
            <person name="Huh W.-K."/>
            <person name="Bower K."/>
            <person name="Howson R.W."/>
            <person name="Belle A."/>
            <person name="Dephoure N."/>
            <person name="O'Shea E.K."/>
            <person name="Weissman J.S."/>
        </authorList>
    </citation>
    <scope>LEVEL OF PROTEIN EXPRESSION [LARGE SCALE ANALYSIS]</scope>
</reference>
<reference key="11">
    <citation type="journal article" date="2003" name="Proc. Natl. Acad. Sci. U.S.A.">
        <title>A SNARE required for retrograde transport to the endoplasmic reticulum.</title>
        <authorList>
            <person name="Burri L."/>
            <person name="Varlamov O."/>
            <person name="Doege C.A."/>
            <person name="Hofmann K."/>
            <person name="Beilharz T."/>
            <person name="Rothman J.E."/>
            <person name="Soellner T.H."/>
            <person name="Lithgow T."/>
        </authorList>
    </citation>
    <scope>FUNCTION</scope>
    <scope>INTERACTION WITH UFE1 AND USE1</scope>
</reference>
<reference key="12">
    <citation type="journal article" date="2008" name="Mol. Cell. Proteomics">
        <title>A multidimensional chromatography technology for in-depth phosphoproteome analysis.</title>
        <authorList>
            <person name="Albuquerque C.P."/>
            <person name="Smolka M.B."/>
            <person name="Payne S.H."/>
            <person name="Bafna V."/>
            <person name="Eng J."/>
            <person name="Zhou H."/>
        </authorList>
    </citation>
    <scope>PHOSPHORYLATION [LARGE SCALE ANALYSIS] AT SER-160</scope>
    <scope>IDENTIFICATION BY MASS SPECTROMETRY [LARGE SCALE ANALYSIS]</scope>
</reference>
<reference key="13">
    <citation type="journal article" date="2012" name="Proc. Natl. Acad. Sci. U.S.A.">
        <title>N-terminal acetylome analyses and functional insights of the N-terminal acetyltransferase NatB.</title>
        <authorList>
            <person name="Van Damme P."/>
            <person name="Lasa M."/>
            <person name="Polevoda B."/>
            <person name="Gazquez C."/>
            <person name="Elosegui-Artola A."/>
            <person name="Kim D.S."/>
            <person name="De Juan-Pardo E."/>
            <person name="Demeyer K."/>
            <person name="Hole K."/>
            <person name="Larrea E."/>
            <person name="Timmerman E."/>
            <person name="Prieto J."/>
            <person name="Arnesen T."/>
            <person name="Sherman F."/>
            <person name="Gevaert K."/>
            <person name="Aldabe R."/>
        </authorList>
    </citation>
    <scope>IDENTIFICATION BY MASS SPECTROMETRY [LARGE SCALE ANALYSIS]</scope>
</reference>
<feature type="chain" id="PRO_0000206769" description="Protein transport protein SEC22">
    <location>
        <begin position="1"/>
        <end position="214"/>
    </location>
</feature>
<feature type="topological domain" description="Cytoplasmic" evidence="1">
    <location>
        <begin position="1"/>
        <end position="192"/>
    </location>
</feature>
<feature type="transmembrane region" description="Helical; Anchor for type IV membrane protein" evidence="1">
    <location>
        <begin position="193"/>
        <end position="213"/>
    </location>
</feature>
<feature type="topological domain" description="Vesicular" evidence="1">
    <location>
        <position position="214"/>
    </location>
</feature>
<feature type="domain" description="Longin" evidence="2">
    <location>
        <begin position="6"/>
        <end position="117"/>
    </location>
</feature>
<feature type="domain" description="v-SNARE coiled-coil homology" evidence="3">
    <location>
        <begin position="132"/>
        <end position="192"/>
    </location>
</feature>
<feature type="modified residue" description="Phosphoserine" evidence="12">
    <location>
        <position position="160"/>
    </location>
</feature>
<proteinExistence type="evidence at protein level"/>
<accession>P22214</accession>
<accession>D6VYR6</accession>
<sequence>MIKSTLIYREDGLPLCTSVDNENDPSLFEQKQKVKIVVSRLTPQSATEATLESGSFEIHYLKKSMVYYFVICESGYPRNLAFSYLNDIAQEFEHSFANEYPKPTVRPYQFVNFDNFLQMTKKSYSDKKVQDNLDQLNQELVGVKQIMSKNIEDLLYRGDSLDKMSDMSSSLKETSKRYRKSAQKINFDLLISQYAPIVIVAFFFVFLFWWIFLK</sequence>